<gene>
    <name evidence="5" type="primary">IMP1B</name>
    <name evidence="7" type="ordered locus">At1g23465</name>
    <name evidence="9" type="ORF">F28C11.10</name>
    <name evidence="8" type="ORF">F5O8.3</name>
</gene>
<name>IMP1B_ARATH</name>
<feature type="chain" id="PRO_0000457994" description="Mitochondrial ATP-independent inner membrane protease subunit 1b">
    <location>
        <begin position="1"/>
        <end position="169"/>
    </location>
</feature>
<feature type="active site" evidence="2">
    <location>
        <position position="47"/>
    </location>
</feature>
<feature type="active site" evidence="2">
    <location>
        <position position="91"/>
    </location>
</feature>
<feature type="splice variant" id="VSP_061876" description="In isoform 2.">
    <location>
        <begin position="156"/>
        <end position="169"/>
    </location>
</feature>
<comment type="function">
    <text evidence="4">Catalyzes the removal of transit peptides required for the targeting of proteins from the mitochondrial matrix, across the inner membrane, into the inter-membrane space.</text>
</comment>
<comment type="subunit">
    <text evidence="1">Heterodimer of 2 subunits, IMP1A/B and IMP12.</text>
</comment>
<comment type="subcellular location">
    <subcellularLocation>
        <location evidence="3">Mitochondrion inner membrane</location>
    </subcellularLocation>
</comment>
<comment type="alternative products">
    <event type="alternative splicing"/>
    <isoform>
        <id>Q5BIV4-1</id>
        <name>1</name>
        <sequence type="displayed"/>
    </isoform>
    <isoform>
        <id>Q5BIV4-2</id>
        <name>2</name>
        <sequence type="described" ref="VSP_061876"/>
    </isoform>
</comment>
<comment type="similarity">
    <text evidence="6">Belongs to the peptidase S26 family. IMP1 subfamily.</text>
</comment>
<comment type="sequence caution" evidence="6">
    <conflict type="erroneous gene model prediction">
        <sequence resource="EMBL-CDS" id="AAC98041"/>
    </conflict>
</comment>
<comment type="sequence caution" evidence="6">
    <conflict type="erroneous gene model prediction">
        <sequence resource="EMBL-CDS" id="AAF79585"/>
    </conflict>
</comment>
<evidence type="ECO:0000250" key="1">
    <source>
        <dbReference type="UniProtKB" id="P28627"/>
    </source>
</evidence>
<evidence type="ECO:0000250" key="2">
    <source>
        <dbReference type="UniProtKB" id="P28628"/>
    </source>
</evidence>
<evidence type="ECO:0000250" key="3">
    <source>
        <dbReference type="UniProtKB" id="Q6NLT8"/>
    </source>
</evidence>
<evidence type="ECO:0000250" key="4">
    <source>
        <dbReference type="UniProtKB" id="Q96LU5"/>
    </source>
</evidence>
<evidence type="ECO:0000303" key="5">
    <source>
    </source>
</evidence>
<evidence type="ECO:0000305" key="6"/>
<evidence type="ECO:0000312" key="7">
    <source>
        <dbReference type="Araport" id="AT1G23465"/>
    </source>
</evidence>
<evidence type="ECO:0000312" key="8">
    <source>
        <dbReference type="EMBL" id="AAC98041.1"/>
    </source>
</evidence>
<evidence type="ECO:0000312" key="9">
    <source>
        <dbReference type="EMBL" id="AAF79585.1"/>
    </source>
</evidence>
<proteinExistence type="evidence at transcript level"/>
<keyword id="KW-0025">Alternative splicing</keyword>
<keyword id="KW-0378">Hydrolase</keyword>
<keyword id="KW-0472">Membrane</keyword>
<keyword id="KW-0496">Mitochondrion</keyword>
<keyword id="KW-0999">Mitochondrion inner membrane</keyword>
<keyword id="KW-1185">Reference proteome</keyword>
<protein>
    <recommendedName>
        <fullName evidence="5">Mitochondrial ATP-independent inner membrane protease subunit 1b</fullName>
        <shortName evidence="5">AtIMP1b</shortName>
        <ecNumber evidence="4">3.4.21.-</ecNumber>
    </recommendedName>
</protein>
<sequence>MTSPSSSFWNTASREAMKSGMFVAKVYCFLHVTTNYLGFMAYAYGPSMIPTLHPSGNMLLAERISKRYQKPSRGDIVVIRSPENPNKTPIKRVVGVEGDCISFVIDPVKSDESQTIVVPKGHVFVQGDYTHNSRDSRNFGPVPYGLIQGRVLWRVWPFQDFGPLGPTPT</sequence>
<reference key="1">
    <citation type="journal article" date="2000" name="Nature">
        <title>Sequence and analysis of chromosome 1 of the plant Arabidopsis thaliana.</title>
        <authorList>
            <person name="Theologis A."/>
            <person name="Ecker J.R."/>
            <person name="Palm C.J."/>
            <person name="Federspiel N.A."/>
            <person name="Kaul S."/>
            <person name="White O."/>
            <person name="Alonso J."/>
            <person name="Altafi H."/>
            <person name="Araujo R."/>
            <person name="Bowman C.L."/>
            <person name="Brooks S.Y."/>
            <person name="Buehler E."/>
            <person name="Chan A."/>
            <person name="Chao Q."/>
            <person name="Chen H."/>
            <person name="Cheuk R.F."/>
            <person name="Chin C.W."/>
            <person name="Chung M.K."/>
            <person name="Conn L."/>
            <person name="Conway A.B."/>
            <person name="Conway A.R."/>
            <person name="Creasy T.H."/>
            <person name="Dewar K."/>
            <person name="Dunn P."/>
            <person name="Etgu P."/>
            <person name="Feldblyum T.V."/>
            <person name="Feng J.-D."/>
            <person name="Fong B."/>
            <person name="Fujii C.Y."/>
            <person name="Gill J.E."/>
            <person name="Goldsmith A.D."/>
            <person name="Haas B."/>
            <person name="Hansen N.F."/>
            <person name="Hughes B."/>
            <person name="Huizar L."/>
            <person name="Hunter J.L."/>
            <person name="Jenkins J."/>
            <person name="Johnson-Hopson C."/>
            <person name="Khan S."/>
            <person name="Khaykin E."/>
            <person name="Kim C.J."/>
            <person name="Koo H.L."/>
            <person name="Kremenetskaia I."/>
            <person name="Kurtz D.B."/>
            <person name="Kwan A."/>
            <person name="Lam B."/>
            <person name="Langin-Hooper S."/>
            <person name="Lee A."/>
            <person name="Lee J.M."/>
            <person name="Lenz C.A."/>
            <person name="Li J.H."/>
            <person name="Li Y.-P."/>
            <person name="Lin X."/>
            <person name="Liu S.X."/>
            <person name="Liu Z.A."/>
            <person name="Luros J.S."/>
            <person name="Maiti R."/>
            <person name="Marziali A."/>
            <person name="Militscher J."/>
            <person name="Miranda M."/>
            <person name="Nguyen M."/>
            <person name="Nierman W.C."/>
            <person name="Osborne B.I."/>
            <person name="Pai G."/>
            <person name="Peterson J."/>
            <person name="Pham P.K."/>
            <person name="Rizzo M."/>
            <person name="Rooney T."/>
            <person name="Rowley D."/>
            <person name="Sakano H."/>
            <person name="Salzberg S.L."/>
            <person name="Schwartz J.R."/>
            <person name="Shinn P."/>
            <person name="Southwick A.M."/>
            <person name="Sun H."/>
            <person name="Tallon L.J."/>
            <person name="Tambunga G."/>
            <person name="Toriumi M.J."/>
            <person name="Town C.D."/>
            <person name="Utterback T."/>
            <person name="Van Aken S."/>
            <person name="Vaysberg M."/>
            <person name="Vysotskaia V.S."/>
            <person name="Walker M."/>
            <person name="Wu D."/>
            <person name="Yu G."/>
            <person name="Fraser C.M."/>
            <person name="Venter J.C."/>
            <person name="Davis R.W."/>
        </authorList>
    </citation>
    <scope>NUCLEOTIDE SEQUENCE [LARGE SCALE GENOMIC DNA]</scope>
    <source>
        <strain>cv. Columbia</strain>
    </source>
</reference>
<reference key="2">
    <citation type="journal article" date="2017" name="Plant J.">
        <title>Araport11: a complete reannotation of the Arabidopsis thaliana reference genome.</title>
        <authorList>
            <person name="Cheng C.Y."/>
            <person name="Krishnakumar V."/>
            <person name="Chan A.P."/>
            <person name="Thibaud-Nissen F."/>
            <person name="Schobel S."/>
            <person name="Town C.D."/>
        </authorList>
    </citation>
    <scope>GENOME REANNOTATION</scope>
    <source>
        <strain>cv. Columbia</strain>
    </source>
</reference>
<reference key="3">
    <citation type="submission" date="2005-03" db="EMBL/GenBank/DDBJ databases">
        <title>Arabidopsis ORF clones.</title>
        <authorList>
            <person name="Kim C.J."/>
            <person name="Chen H."/>
            <person name="Cheuk R.F."/>
            <person name="Shinn P."/>
            <person name="Ecker J.R."/>
        </authorList>
    </citation>
    <scope>NUCLEOTIDE SEQUENCE [LARGE SCALE MRNA] (ISOFORMS 1 AND 2)</scope>
    <source>
        <strain>cv. Columbia</strain>
    </source>
</reference>
<reference key="4">
    <citation type="journal article" date="2012" name="Physiol. Plantarum">
        <title>Proteolytic system of plant mitochondria.</title>
        <authorList>
            <person name="Kwasniak M."/>
            <person name="Pogorzelec L."/>
            <person name="Migdal I."/>
            <person name="Smakowska E."/>
            <person name="Janska H."/>
        </authorList>
    </citation>
    <scope>IDENTIFICATION</scope>
    <scope>REVIEW OF MITOCHONDRIAL PROTEOLYTIC SYSTEM</scope>
</reference>
<organism>
    <name type="scientific">Arabidopsis thaliana</name>
    <name type="common">Mouse-ear cress</name>
    <dbReference type="NCBI Taxonomy" id="3702"/>
    <lineage>
        <taxon>Eukaryota</taxon>
        <taxon>Viridiplantae</taxon>
        <taxon>Streptophyta</taxon>
        <taxon>Embryophyta</taxon>
        <taxon>Tracheophyta</taxon>
        <taxon>Spermatophyta</taxon>
        <taxon>Magnoliopsida</taxon>
        <taxon>eudicotyledons</taxon>
        <taxon>Gunneridae</taxon>
        <taxon>Pentapetalae</taxon>
        <taxon>rosids</taxon>
        <taxon>malvids</taxon>
        <taxon>Brassicales</taxon>
        <taxon>Brassicaceae</taxon>
        <taxon>Camelineae</taxon>
        <taxon>Arabidopsis</taxon>
    </lineage>
</organism>
<dbReference type="EC" id="3.4.21.-" evidence="4"/>
<dbReference type="EMBL" id="AC005990">
    <property type="protein sequence ID" value="AAC98041.1"/>
    <property type="status" value="ALT_SEQ"/>
    <property type="molecule type" value="Genomic_DNA"/>
</dbReference>
<dbReference type="EMBL" id="AC007945">
    <property type="protein sequence ID" value="AAF79585.1"/>
    <property type="status" value="ALT_SEQ"/>
    <property type="molecule type" value="Genomic_DNA"/>
</dbReference>
<dbReference type="EMBL" id="CP002684">
    <property type="protein sequence ID" value="AEE30390.2"/>
    <property type="molecule type" value="Genomic_DNA"/>
</dbReference>
<dbReference type="EMBL" id="BT021120">
    <property type="protein sequence ID" value="AAX22255.1"/>
    <property type="molecule type" value="mRNA"/>
</dbReference>
<dbReference type="EMBL" id="BT029326">
    <property type="protein sequence ID" value="ABK32140.1"/>
    <property type="molecule type" value="mRNA"/>
</dbReference>
<dbReference type="PIR" id="C86368">
    <property type="entry name" value="C86368"/>
</dbReference>
<dbReference type="RefSeq" id="NP_001319068.1">
    <molecule id="Q5BIV4-1"/>
    <property type="nucleotide sequence ID" value="NM_001332603.1"/>
</dbReference>
<dbReference type="SMR" id="Q5BIV4"/>
<dbReference type="FunCoup" id="Q5BIV4">
    <property type="interactions" value="3215"/>
</dbReference>
<dbReference type="STRING" id="3702.Q5BIV4"/>
<dbReference type="CAZy" id="GH28">
    <property type="family name" value="Glycoside Hydrolase Family 28"/>
</dbReference>
<dbReference type="MEROPS" id="S26.A05"/>
<dbReference type="GlyGen" id="Q5BIV4">
    <property type="glycosylation" value="1 site"/>
</dbReference>
<dbReference type="ProteomicsDB" id="182922"/>
<dbReference type="EnsemblPlants" id="AT1G23465.1">
    <molecule id="Q5BIV4-1"/>
    <property type="protein sequence ID" value="AT1G23465.1"/>
    <property type="gene ID" value="AT1G23465"/>
</dbReference>
<dbReference type="GeneID" id="2745760"/>
<dbReference type="Gramene" id="AT1G23465.1">
    <molecule id="Q5BIV4-1"/>
    <property type="protein sequence ID" value="AT1G23465.1"/>
    <property type="gene ID" value="AT1G23465"/>
</dbReference>
<dbReference type="KEGG" id="ath:AT1G23465"/>
<dbReference type="Araport" id="AT1G23465"/>
<dbReference type="TAIR" id="AT1G23465">
    <property type="gene designation" value="ATIMP1B"/>
</dbReference>
<dbReference type="HOGENOM" id="CLU_028723_4_3_1"/>
<dbReference type="InParanoid" id="Q5BIV4"/>
<dbReference type="OMA" id="STHWFWE"/>
<dbReference type="OrthoDB" id="308440at2759"/>
<dbReference type="PRO" id="PR:Q5BIV4"/>
<dbReference type="Proteomes" id="UP000006548">
    <property type="component" value="Chromosome 1"/>
</dbReference>
<dbReference type="ExpressionAtlas" id="Q5BIV4">
    <property type="expression patterns" value="baseline and differential"/>
</dbReference>
<dbReference type="GO" id="GO:0005743">
    <property type="term" value="C:mitochondrial inner membrane"/>
    <property type="evidence" value="ECO:0007669"/>
    <property type="project" value="UniProtKB-SubCell"/>
</dbReference>
<dbReference type="GO" id="GO:0005739">
    <property type="term" value="C:mitochondrion"/>
    <property type="evidence" value="ECO:0000314"/>
    <property type="project" value="UniProtKB"/>
</dbReference>
<dbReference type="GO" id="GO:0004252">
    <property type="term" value="F:serine-type endopeptidase activity"/>
    <property type="evidence" value="ECO:0007669"/>
    <property type="project" value="InterPro"/>
</dbReference>
<dbReference type="GO" id="GO:0006465">
    <property type="term" value="P:signal peptide processing"/>
    <property type="evidence" value="ECO:0007669"/>
    <property type="project" value="InterPro"/>
</dbReference>
<dbReference type="CDD" id="cd06530">
    <property type="entry name" value="S26_SPase_I"/>
    <property type="match status" value="1"/>
</dbReference>
<dbReference type="FunFam" id="2.10.109.10:FF:000014">
    <property type="entry name" value="Inner membrane protease subunit 1"/>
    <property type="match status" value="1"/>
</dbReference>
<dbReference type="Gene3D" id="2.10.109.10">
    <property type="entry name" value="Umud Fragment, subunit A"/>
    <property type="match status" value="1"/>
</dbReference>
<dbReference type="InterPro" id="IPR036286">
    <property type="entry name" value="LexA/Signal_pep-like_sf"/>
</dbReference>
<dbReference type="InterPro" id="IPR052064">
    <property type="entry name" value="Mito_IMP1_subunit"/>
</dbReference>
<dbReference type="InterPro" id="IPR000223">
    <property type="entry name" value="Pept_S26A_signal_pept_1"/>
</dbReference>
<dbReference type="InterPro" id="IPR019533">
    <property type="entry name" value="Peptidase_S26"/>
</dbReference>
<dbReference type="NCBIfam" id="TIGR02227">
    <property type="entry name" value="sigpep_I_bact"/>
    <property type="match status" value="1"/>
</dbReference>
<dbReference type="PANTHER" id="PTHR12383:SF36">
    <property type="entry name" value="MITOCHONDRIAL ATP-INDEPENDENT INNER MEMBRANE PROTEASE SUBUNIT 1B-RELATED"/>
    <property type="match status" value="1"/>
</dbReference>
<dbReference type="PANTHER" id="PTHR12383">
    <property type="entry name" value="PROTEASE FAMILY S26 MITOCHONDRIAL INNER MEMBRANE PROTEASE-RELATED"/>
    <property type="match status" value="1"/>
</dbReference>
<dbReference type="Pfam" id="PF10502">
    <property type="entry name" value="Peptidase_S26"/>
    <property type="match status" value="2"/>
</dbReference>
<dbReference type="PRINTS" id="PR00727">
    <property type="entry name" value="LEADERPTASE"/>
</dbReference>
<dbReference type="SUPFAM" id="SSF51306">
    <property type="entry name" value="LexA/Signal peptidase"/>
    <property type="match status" value="1"/>
</dbReference>
<accession>Q5BIV4</accession>
<accession>A0JPV6</accession>
<accession>Q9LQD0</accession>
<accession>Q9ZUE6</accession>